<reference key="1">
    <citation type="journal article" date="2007" name="Genome Biol.">
        <title>Characterization and modeling of the Haemophilus influenzae core and supragenomes based on the complete genomic sequences of Rd and 12 clinical nontypeable strains.</title>
        <authorList>
            <person name="Hogg J.S."/>
            <person name="Hu F.Z."/>
            <person name="Janto B."/>
            <person name="Boissy R."/>
            <person name="Hayes J."/>
            <person name="Keefe R."/>
            <person name="Post J.C."/>
            <person name="Ehrlich G.D."/>
        </authorList>
    </citation>
    <scope>NUCLEOTIDE SEQUENCE [LARGE SCALE GENOMIC DNA]</scope>
    <source>
        <strain>PittGG</strain>
    </source>
</reference>
<evidence type="ECO:0000255" key="1">
    <source>
        <dbReference type="HAMAP-Rule" id="MF_01384"/>
    </source>
</evidence>
<evidence type="ECO:0000305" key="2"/>
<accession>A5UH41</accession>
<gene>
    <name evidence="1" type="primary">ureD</name>
    <name type="ordered locus">CGSHiGG_05930</name>
</gene>
<feature type="chain" id="PRO_0000346566" description="Urease accessory protein UreD">
    <location>
        <begin position="1"/>
        <end position="271"/>
    </location>
</feature>
<proteinExistence type="inferred from homology"/>
<keyword id="KW-0143">Chaperone</keyword>
<keyword id="KW-0963">Cytoplasm</keyword>
<keyword id="KW-0996">Nickel insertion</keyword>
<dbReference type="EMBL" id="CP000672">
    <property type="protein sequence ID" value="ABR00097.1"/>
    <property type="status" value="ALT_INIT"/>
    <property type="molecule type" value="Genomic_DNA"/>
</dbReference>
<dbReference type="SMR" id="A5UH41"/>
<dbReference type="KEGG" id="hiq:CGSHiGG_05930"/>
<dbReference type="HOGENOM" id="CLU_056339_6_0_6"/>
<dbReference type="Proteomes" id="UP000001990">
    <property type="component" value="Chromosome"/>
</dbReference>
<dbReference type="GO" id="GO:0005737">
    <property type="term" value="C:cytoplasm"/>
    <property type="evidence" value="ECO:0007669"/>
    <property type="project" value="UniProtKB-SubCell"/>
</dbReference>
<dbReference type="GO" id="GO:0016151">
    <property type="term" value="F:nickel cation binding"/>
    <property type="evidence" value="ECO:0007669"/>
    <property type="project" value="UniProtKB-UniRule"/>
</dbReference>
<dbReference type="HAMAP" id="MF_01384">
    <property type="entry name" value="UreD"/>
    <property type="match status" value="1"/>
</dbReference>
<dbReference type="InterPro" id="IPR002669">
    <property type="entry name" value="UreD"/>
</dbReference>
<dbReference type="PANTHER" id="PTHR33643">
    <property type="entry name" value="UREASE ACCESSORY PROTEIN D"/>
    <property type="match status" value="1"/>
</dbReference>
<dbReference type="PANTHER" id="PTHR33643:SF1">
    <property type="entry name" value="UREASE ACCESSORY PROTEIN D"/>
    <property type="match status" value="1"/>
</dbReference>
<dbReference type="Pfam" id="PF01774">
    <property type="entry name" value="UreD"/>
    <property type="match status" value="1"/>
</dbReference>
<name>URED_HAEIG</name>
<comment type="function">
    <text evidence="1">Required for maturation of urease via the functional incorporation of the urease nickel metallocenter.</text>
</comment>
<comment type="subunit">
    <text evidence="1">UreD, UreF and UreG form a complex that acts as a GTP-hydrolysis-dependent molecular chaperone, activating the urease apoprotein by helping to assemble the nickel containing metallocenter of UreC. The UreE protein probably delivers the nickel.</text>
</comment>
<comment type="subcellular location">
    <subcellularLocation>
        <location evidence="1">Cytoplasm</location>
    </subcellularLocation>
</comment>
<comment type="similarity">
    <text evidence="1">Belongs to the UreD family.</text>
</comment>
<comment type="sequence caution" evidence="2">
    <conflict type="erroneous initiation">
        <sequence resource="EMBL-CDS" id="ABR00097"/>
    </conflict>
</comment>
<organism>
    <name type="scientific">Haemophilus influenzae (strain PittGG)</name>
    <dbReference type="NCBI Taxonomy" id="374931"/>
    <lineage>
        <taxon>Bacteria</taxon>
        <taxon>Pseudomonadati</taxon>
        <taxon>Pseudomonadota</taxon>
        <taxon>Gammaproteobacteria</taxon>
        <taxon>Pasteurellales</taxon>
        <taxon>Pasteurellaceae</taxon>
        <taxon>Haemophilus</taxon>
    </lineage>
</organism>
<protein>
    <recommendedName>
        <fullName evidence="1">Urease accessory protein UreD</fullName>
    </recommendedName>
</protein>
<sequence>MNSKLSLSTKLSSNGKTQLAEYFAMPPFKVITLPSYDDAWANGLNAMQMSSSPGVLAGDLLEIDISLAKLTALSLNTQAFTRVQAMNEGDSAMQTTHILLAENSRLFYLPHPLVLHKDSVFKQKTLIEMDEQSELIYGEIVAIGRVLNDERFAFRQFSSHLKIYALQNDGKKRPLVSDCIQWLPSKMNLTALSQMENYSHQGSLTYLNLAKNNAEIKQQVQALQQQSAEEKDLLIGISQLNEYGLMVRVLGCRAEQIQKLFEKIGRLLKSV</sequence>